<protein>
    <recommendedName>
        <fullName>Uncharacterized protein ORF120</fullName>
    </recommendedName>
</protein>
<sequence length="76" mass="8641">MYLPLLLFCVISCYGEQINNLDDLQAKLDSMPPSDFIDHNGHNICQDCDRLCPLISDNPTCEEDCYGRCNKGITRQ</sequence>
<gene>
    <name type="ORF">ORF120</name>
</gene>
<keyword id="KW-1185">Reference proteome</keyword>
<keyword id="KW-0732">Signal</keyword>
<evidence type="ECO:0000255" key="1"/>
<proteinExistence type="inferred from homology"/>
<accession>Q6R799</accession>
<dbReference type="EMBL" id="AY509253">
    <property type="protein sequence ID" value="AAS01009.1"/>
    <property type="molecule type" value="Genomic_DNA"/>
</dbReference>
<dbReference type="EMBL" id="AY509253">
    <property type="protein sequence ID" value="AAS01016.1"/>
    <property type="molecule type" value="Genomic_DNA"/>
</dbReference>
<dbReference type="RefSeq" id="YP_024662.1">
    <property type="nucleotide sequence ID" value="NC_005881.2"/>
</dbReference>
<dbReference type="RefSeq" id="YP_024669.1">
    <property type="nucleotide sequence ID" value="NC_005881.2"/>
</dbReference>
<dbReference type="KEGG" id="vg:2948197"/>
<dbReference type="KEGG" id="vg:2948215"/>
<dbReference type="Proteomes" id="UP000007021">
    <property type="component" value="Segment"/>
</dbReference>
<organismHost>
    <name type="scientific">Magallana gigas</name>
    <name type="common">Pacific oyster</name>
    <name type="synonym">Crassostrea gigas</name>
    <dbReference type="NCBI Taxonomy" id="29159"/>
</organismHost>
<organismHost>
    <name type="scientific">Pecten maximus</name>
    <name type="common">King scallop</name>
    <name type="synonym">Pilgrim's clam</name>
    <dbReference type="NCBI Taxonomy" id="6579"/>
</organismHost>
<feature type="signal peptide" evidence="1">
    <location>
        <begin position="1"/>
        <end position="15"/>
    </location>
</feature>
<feature type="chain" id="PRO_0000385132" description="Uncharacterized protein ORF120">
    <location>
        <begin position="16"/>
        <end position="76"/>
    </location>
</feature>
<name>Y120_OSHVF</name>
<reference key="1">
    <citation type="journal article" date="2005" name="J. Gen. Virol.">
        <title>A novel class of herpesvirus with bivalve hosts.</title>
        <authorList>
            <person name="Davison A.J."/>
            <person name="Trus B.L."/>
            <person name="Cheng N."/>
            <person name="Steven A.C."/>
            <person name="Watson M.S."/>
            <person name="Cunningham C."/>
            <person name="Le Deuff R.M."/>
            <person name="Renault T."/>
        </authorList>
    </citation>
    <scope>NUCLEOTIDE SEQUENCE [LARGE SCALE GENOMIC DNA]</scope>
</reference>
<organism>
    <name type="scientific">Ostreid herpesvirus 1 (isolate France)</name>
    <name type="common">OsHV-1</name>
    <name type="synonym">Pacific oyster herpesvirus</name>
    <dbReference type="NCBI Taxonomy" id="654903"/>
    <lineage>
        <taxon>Viruses</taxon>
        <taxon>Duplodnaviria</taxon>
        <taxon>Heunggongvirae</taxon>
        <taxon>Peploviricota</taxon>
        <taxon>Herviviricetes</taxon>
        <taxon>Herpesvirales</taxon>
        <taxon>Malacoherpesviridae</taxon>
        <taxon>Ostreavirus</taxon>
        <taxon>Ostreavirus ostreidmalaco1</taxon>
        <taxon>Ostreid herpesvirus 1</taxon>
    </lineage>
</organism>